<organism>
    <name type="scientific">Nasua nasua</name>
    <name type="common">Ring-tailed coati</name>
    <dbReference type="NCBI Taxonomy" id="9651"/>
    <lineage>
        <taxon>Eukaryota</taxon>
        <taxon>Metazoa</taxon>
        <taxon>Chordata</taxon>
        <taxon>Craniata</taxon>
        <taxon>Vertebrata</taxon>
        <taxon>Euteleostomi</taxon>
        <taxon>Mammalia</taxon>
        <taxon>Eutheria</taxon>
        <taxon>Laurasiatheria</taxon>
        <taxon>Carnivora</taxon>
        <taxon>Caniformia</taxon>
        <taxon>Musteloidea</taxon>
        <taxon>Procyonidae</taxon>
        <taxon>Nasua</taxon>
    </lineage>
</organism>
<evidence type="ECO:0000250" key="1">
    <source>
        <dbReference type="UniProtKB" id="P02086"/>
    </source>
</evidence>
<evidence type="ECO:0000250" key="2">
    <source>
        <dbReference type="UniProtKB" id="P68871"/>
    </source>
</evidence>
<evidence type="ECO:0000255" key="3">
    <source>
        <dbReference type="PROSITE-ProRule" id="PRU00238"/>
    </source>
</evidence>
<protein>
    <recommendedName>
        <fullName>Hemoglobin subunit beta</fullName>
    </recommendedName>
    <alternativeName>
        <fullName>Beta-globin</fullName>
    </alternativeName>
    <alternativeName>
        <fullName>Hemoglobin beta chain</fullName>
    </alternativeName>
</protein>
<feature type="chain" id="PRO_0000053034" description="Hemoglobin subunit beta">
    <location>
        <begin position="1"/>
        <end position="146"/>
    </location>
</feature>
<feature type="domain" description="Globin" evidence="3">
    <location>
        <begin position="2"/>
        <end position="146"/>
    </location>
</feature>
<feature type="binding site" description="distal binding residue">
    <location>
        <position position="63"/>
    </location>
    <ligand>
        <name>heme b</name>
        <dbReference type="ChEBI" id="CHEBI:60344"/>
    </ligand>
    <ligandPart>
        <name>Fe</name>
        <dbReference type="ChEBI" id="CHEBI:18248"/>
    </ligandPart>
</feature>
<feature type="binding site" description="proximal binding residue">
    <location>
        <position position="92"/>
    </location>
    <ligand>
        <name>heme b</name>
        <dbReference type="ChEBI" id="CHEBI:60344"/>
    </ligand>
    <ligandPart>
        <name>Fe</name>
        <dbReference type="ChEBI" id="CHEBI:18248"/>
    </ligandPart>
</feature>
<feature type="modified residue" description="N-acetylvaline" evidence="1">
    <location>
        <position position="1"/>
    </location>
</feature>
<feature type="modified residue" description="Phosphothreonine" evidence="2">
    <location>
        <position position="12"/>
    </location>
</feature>
<feature type="modified residue" description="Phosphoserine" evidence="2">
    <location>
        <position position="44"/>
    </location>
</feature>
<feature type="modified residue" description="N6-acetyllysine" evidence="2">
    <location>
        <position position="59"/>
    </location>
</feature>
<feature type="modified residue" description="N6-acetyllysine" evidence="2">
    <location>
        <position position="82"/>
    </location>
</feature>
<feature type="modified residue" description="S-nitrosocysteine" evidence="2">
    <location>
        <position position="93"/>
    </location>
</feature>
<feature type="modified residue" description="N6-acetyllysine" evidence="2">
    <location>
        <position position="144"/>
    </location>
</feature>
<keyword id="KW-0007">Acetylation</keyword>
<keyword id="KW-0903">Direct protein sequencing</keyword>
<keyword id="KW-0349">Heme</keyword>
<keyword id="KW-0408">Iron</keyword>
<keyword id="KW-0479">Metal-binding</keyword>
<keyword id="KW-0561">Oxygen transport</keyword>
<keyword id="KW-0597">Phosphoprotein</keyword>
<keyword id="KW-0702">S-nitrosylation</keyword>
<keyword id="KW-0813">Transport</keyword>
<proteinExistence type="evidence at protein level"/>
<comment type="function">
    <text>Involved in oxygen transport from the lung to the various peripheral tissues.</text>
</comment>
<comment type="subunit">
    <text>Heterotetramer of two alpha chains and two beta chains.</text>
</comment>
<comment type="tissue specificity">
    <text>Red blood cells.</text>
</comment>
<comment type="similarity">
    <text evidence="3">Belongs to the globin family.</text>
</comment>
<sequence>VHLTGEEKTAVTNLWAKVNVDEVGGEALGRLLVVYPWTQRFFESFGDLSSPDAIMGNPKVKAHGKKVLNSFSEGLKNLDNLKGTFAKLSELHCDKLHVDPENFRLLGNVLVCVLAHHFGKEFTPQVQAAYQKVVAGVANALAHKYH</sequence>
<accession>P26916</accession>
<dbReference type="PIR" id="B39020">
    <property type="entry name" value="B39020"/>
</dbReference>
<dbReference type="SMR" id="P26916"/>
<dbReference type="GO" id="GO:0072562">
    <property type="term" value="C:blood microparticle"/>
    <property type="evidence" value="ECO:0007669"/>
    <property type="project" value="TreeGrafter"/>
</dbReference>
<dbReference type="GO" id="GO:0031838">
    <property type="term" value="C:haptoglobin-hemoglobin complex"/>
    <property type="evidence" value="ECO:0007669"/>
    <property type="project" value="TreeGrafter"/>
</dbReference>
<dbReference type="GO" id="GO:0005833">
    <property type="term" value="C:hemoglobin complex"/>
    <property type="evidence" value="ECO:0007669"/>
    <property type="project" value="InterPro"/>
</dbReference>
<dbReference type="GO" id="GO:0031720">
    <property type="term" value="F:haptoglobin binding"/>
    <property type="evidence" value="ECO:0007669"/>
    <property type="project" value="TreeGrafter"/>
</dbReference>
<dbReference type="GO" id="GO:0020037">
    <property type="term" value="F:heme binding"/>
    <property type="evidence" value="ECO:0007669"/>
    <property type="project" value="InterPro"/>
</dbReference>
<dbReference type="GO" id="GO:0031721">
    <property type="term" value="F:hemoglobin alpha binding"/>
    <property type="evidence" value="ECO:0007669"/>
    <property type="project" value="TreeGrafter"/>
</dbReference>
<dbReference type="GO" id="GO:0046872">
    <property type="term" value="F:metal ion binding"/>
    <property type="evidence" value="ECO:0007669"/>
    <property type="project" value="UniProtKB-KW"/>
</dbReference>
<dbReference type="GO" id="GO:0043177">
    <property type="term" value="F:organic acid binding"/>
    <property type="evidence" value="ECO:0007669"/>
    <property type="project" value="TreeGrafter"/>
</dbReference>
<dbReference type="GO" id="GO:0019825">
    <property type="term" value="F:oxygen binding"/>
    <property type="evidence" value="ECO:0007669"/>
    <property type="project" value="InterPro"/>
</dbReference>
<dbReference type="GO" id="GO:0005344">
    <property type="term" value="F:oxygen carrier activity"/>
    <property type="evidence" value="ECO:0007669"/>
    <property type="project" value="UniProtKB-KW"/>
</dbReference>
<dbReference type="GO" id="GO:0004601">
    <property type="term" value="F:peroxidase activity"/>
    <property type="evidence" value="ECO:0007669"/>
    <property type="project" value="TreeGrafter"/>
</dbReference>
<dbReference type="GO" id="GO:0042744">
    <property type="term" value="P:hydrogen peroxide catabolic process"/>
    <property type="evidence" value="ECO:0007669"/>
    <property type="project" value="TreeGrafter"/>
</dbReference>
<dbReference type="CDD" id="cd08925">
    <property type="entry name" value="Hb-beta-like"/>
    <property type="match status" value="1"/>
</dbReference>
<dbReference type="FunFam" id="1.10.490.10:FF:000001">
    <property type="entry name" value="Hemoglobin subunit beta"/>
    <property type="match status" value="1"/>
</dbReference>
<dbReference type="Gene3D" id="1.10.490.10">
    <property type="entry name" value="Globins"/>
    <property type="match status" value="1"/>
</dbReference>
<dbReference type="InterPro" id="IPR000971">
    <property type="entry name" value="Globin"/>
</dbReference>
<dbReference type="InterPro" id="IPR009050">
    <property type="entry name" value="Globin-like_sf"/>
</dbReference>
<dbReference type="InterPro" id="IPR012292">
    <property type="entry name" value="Globin/Proto"/>
</dbReference>
<dbReference type="InterPro" id="IPR002337">
    <property type="entry name" value="Hemoglobin_b"/>
</dbReference>
<dbReference type="InterPro" id="IPR050056">
    <property type="entry name" value="Hemoglobin_oxygen_transport"/>
</dbReference>
<dbReference type="PANTHER" id="PTHR11442">
    <property type="entry name" value="HEMOGLOBIN FAMILY MEMBER"/>
    <property type="match status" value="1"/>
</dbReference>
<dbReference type="PANTHER" id="PTHR11442:SF42">
    <property type="entry name" value="HEMOGLOBIN SUBUNIT BETA"/>
    <property type="match status" value="1"/>
</dbReference>
<dbReference type="Pfam" id="PF00042">
    <property type="entry name" value="Globin"/>
    <property type="match status" value="1"/>
</dbReference>
<dbReference type="PRINTS" id="PR00814">
    <property type="entry name" value="BETAHAEM"/>
</dbReference>
<dbReference type="SUPFAM" id="SSF46458">
    <property type="entry name" value="Globin-like"/>
    <property type="match status" value="1"/>
</dbReference>
<dbReference type="PROSITE" id="PS01033">
    <property type="entry name" value="GLOBIN"/>
    <property type="match status" value="1"/>
</dbReference>
<reference key="1">
    <citation type="journal article" date="1990" name="J. Protein Chem.">
        <title>Carnivora: the primary structure of hemoglobin from adult coati (Nasua nasua rufa, Procyonidae).</title>
        <authorList>
            <person name="Ahmed A."/>
            <person name="Jahan M."/>
            <person name="Braunitzer G."/>
        </authorList>
    </citation>
    <scope>PROTEIN SEQUENCE</scope>
</reference>
<gene>
    <name type="primary">HBB</name>
</gene>
<name>HBB_NASNA</name>